<comment type="function">
    <text evidence="1">Produces ATP from ADP in the presence of a proton gradient across the membrane. The catalytic sites are hosted primarily by the beta subunits.</text>
</comment>
<comment type="catalytic activity">
    <reaction evidence="1">
        <text>ATP + H2O + 4 H(+)(in) = ADP + phosphate + 5 H(+)(out)</text>
        <dbReference type="Rhea" id="RHEA:57720"/>
        <dbReference type="ChEBI" id="CHEBI:15377"/>
        <dbReference type="ChEBI" id="CHEBI:15378"/>
        <dbReference type="ChEBI" id="CHEBI:30616"/>
        <dbReference type="ChEBI" id="CHEBI:43474"/>
        <dbReference type="ChEBI" id="CHEBI:456216"/>
        <dbReference type="EC" id="7.1.2.2"/>
    </reaction>
</comment>
<comment type="subunit">
    <text evidence="1">F-type ATPases have 2 components, CF(1) - the catalytic core - and CF(0) - the membrane proton channel. CF(1) has five subunits: alpha(3), beta(3), gamma(1), delta(1), epsilon(1). CF(0) has three main subunits: a(1), b(2) and c(9-12). The alpha and beta chains form an alternating ring which encloses part of the gamma chain. CF(1) is attached to CF(0) by a central stalk formed by the gamma and epsilon chains, while a peripheral stalk is formed by the delta and b chains.</text>
</comment>
<comment type="subcellular location">
    <subcellularLocation>
        <location evidence="1">Cell inner membrane</location>
        <topology evidence="1">Peripheral membrane protein</topology>
    </subcellularLocation>
</comment>
<comment type="similarity">
    <text evidence="1">Belongs to the ATPase alpha/beta chains family.</text>
</comment>
<reference key="1">
    <citation type="journal article" date="2006" name="J. Bacteriol.">
        <title>The genome of the obligately intracellular bacterium Ehrlichia canis reveals themes of complex membrane structure and immune evasion strategies.</title>
        <authorList>
            <person name="Mavromatis K."/>
            <person name="Doyle C.K."/>
            <person name="Lykidis A."/>
            <person name="Ivanova N."/>
            <person name="Francino M.P."/>
            <person name="Chain P."/>
            <person name="Shin M."/>
            <person name="Malfatti S."/>
            <person name="Larimer F."/>
            <person name="Copeland A."/>
            <person name="Detter J.C."/>
            <person name="Land M."/>
            <person name="Richardson P.M."/>
            <person name="Yu X.J."/>
            <person name="Walker D.H."/>
            <person name="McBride J.W."/>
            <person name="Kyrpides N.C."/>
        </authorList>
    </citation>
    <scope>NUCLEOTIDE SEQUENCE [LARGE SCALE GENOMIC DNA]</scope>
    <source>
        <strain>Jake</strain>
    </source>
</reference>
<accession>Q3YS09</accession>
<name>ATPB_EHRCJ</name>
<gene>
    <name evidence="1" type="primary">atpD</name>
    <name type="ordered locus">Ecaj_0459</name>
</gene>
<sequence>MSSLANKAKSKGKSSKSKSNVNTQVDELSDSIGLVVRVMTAVVDIKFDGGKVPKILNALESKKFYNGKKLVLEVSQHISDNIVRCIALDSTDGLSRNDEFIDTRAPISVPVGRGTLGRVFDVLGNTIDDCGPLEESKYIIKPIYSEIPKLTDQKIATEILVTGIKVIDLLAPYLKGGKVGLFGGAGVGKTVLIMELIHNIAKAHRGVSVFAGVGERTREGNDLYHEMIESGVINLNEKDQSQAVLVYGQMNEPPGARLRVALSALTMAEYFRDSENQDVLFFVDNIFRFTQSGSEISALLGRIPSAVGYQPTLAAEMGAMQERITSTNNGSITSVQAIYVPADDLTDPAPATSFAHLDSTTVLSRQISELGIYPAVDPLDSTSQALSADIVGEEHYEVAKEVQRILQTYKSLQDIIAILGMDELSEDDKLIVARARKIQRFLSQPFHVAEVFTGSPGKFVSLEDTVSSFKGLVEGKYDHLPEAAFYMVGSIDDVIKKAELLQKEGKV</sequence>
<protein>
    <recommendedName>
        <fullName evidence="1">ATP synthase subunit beta</fullName>
        <ecNumber evidence="1">7.1.2.2</ecNumber>
    </recommendedName>
    <alternativeName>
        <fullName evidence="1">ATP synthase F1 sector subunit beta</fullName>
    </alternativeName>
    <alternativeName>
        <fullName evidence="1">F-ATPase subunit beta</fullName>
    </alternativeName>
</protein>
<proteinExistence type="inferred from homology"/>
<evidence type="ECO:0000255" key="1">
    <source>
        <dbReference type="HAMAP-Rule" id="MF_01347"/>
    </source>
</evidence>
<evidence type="ECO:0000256" key="2">
    <source>
        <dbReference type="SAM" id="MobiDB-lite"/>
    </source>
</evidence>
<feature type="chain" id="PRO_0000254255" description="ATP synthase subunit beta">
    <location>
        <begin position="1"/>
        <end position="507"/>
    </location>
</feature>
<feature type="region of interest" description="Disordered" evidence="2">
    <location>
        <begin position="1"/>
        <end position="22"/>
    </location>
</feature>
<feature type="binding site" evidence="1">
    <location>
        <begin position="183"/>
        <end position="190"/>
    </location>
    <ligand>
        <name>ATP</name>
        <dbReference type="ChEBI" id="CHEBI:30616"/>
    </ligand>
</feature>
<organism>
    <name type="scientific">Ehrlichia canis (strain Jake)</name>
    <dbReference type="NCBI Taxonomy" id="269484"/>
    <lineage>
        <taxon>Bacteria</taxon>
        <taxon>Pseudomonadati</taxon>
        <taxon>Pseudomonadota</taxon>
        <taxon>Alphaproteobacteria</taxon>
        <taxon>Rickettsiales</taxon>
        <taxon>Anaplasmataceae</taxon>
        <taxon>Ehrlichia</taxon>
    </lineage>
</organism>
<keyword id="KW-0066">ATP synthesis</keyword>
<keyword id="KW-0067">ATP-binding</keyword>
<keyword id="KW-0997">Cell inner membrane</keyword>
<keyword id="KW-1003">Cell membrane</keyword>
<keyword id="KW-0139">CF(1)</keyword>
<keyword id="KW-0375">Hydrogen ion transport</keyword>
<keyword id="KW-0406">Ion transport</keyword>
<keyword id="KW-0472">Membrane</keyword>
<keyword id="KW-0547">Nucleotide-binding</keyword>
<keyword id="KW-1278">Translocase</keyword>
<keyword id="KW-0813">Transport</keyword>
<dbReference type="EC" id="7.1.2.2" evidence="1"/>
<dbReference type="EMBL" id="CP000107">
    <property type="protein sequence ID" value="AAZ68496.1"/>
    <property type="molecule type" value="Genomic_DNA"/>
</dbReference>
<dbReference type="SMR" id="Q3YS09"/>
<dbReference type="FunCoup" id="Q3YS09">
    <property type="interactions" value="258"/>
</dbReference>
<dbReference type="STRING" id="269484.Ecaj_0459"/>
<dbReference type="KEGG" id="ecn:Ecaj_0459"/>
<dbReference type="eggNOG" id="COG0055">
    <property type="taxonomic scope" value="Bacteria"/>
</dbReference>
<dbReference type="HOGENOM" id="CLU_022398_0_2_5"/>
<dbReference type="InParanoid" id="Q3YS09"/>
<dbReference type="Proteomes" id="UP000000435">
    <property type="component" value="Chromosome"/>
</dbReference>
<dbReference type="GO" id="GO:0005886">
    <property type="term" value="C:plasma membrane"/>
    <property type="evidence" value="ECO:0007669"/>
    <property type="project" value="UniProtKB-SubCell"/>
</dbReference>
<dbReference type="GO" id="GO:0045259">
    <property type="term" value="C:proton-transporting ATP synthase complex"/>
    <property type="evidence" value="ECO:0007669"/>
    <property type="project" value="UniProtKB-KW"/>
</dbReference>
<dbReference type="GO" id="GO:0005524">
    <property type="term" value="F:ATP binding"/>
    <property type="evidence" value="ECO:0007669"/>
    <property type="project" value="UniProtKB-UniRule"/>
</dbReference>
<dbReference type="GO" id="GO:0016887">
    <property type="term" value="F:ATP hydrolysis activity"/>
    <property type="evidence" value="ECO:0007669"/>
    <property type="project" value="InterPro"/>
</dbReference>
<dbReference type="GO" id="GO:0046933">
    <property type="term" value="F:proton-transporting ATP synthase activity, rotational mechanism"/>
    <property type="evidence" value="ECO:0007669"/>
    <property type="project" value="UniProtKB-UniRule"/>
</dbReference>
<dbReference type="CDD" id="cd18110">
    <property type="entry name" value="ATP-synt_F1_beta_C"/>
    <property type="match status" value="1"/>
</dbReference>
<dbReference type="CDD" id="cd18115">
    <property type="entry name" value="ATP-synt_F1_beta_N"/>
    <property type="match status" value="1"/>
</dbReference>
<dbReference type="CDD" id="cd01133">
    <property type="entry name" value="F1-ATPase_beta_CD"/>
    <property type="match status" value="1"/>
</dbReference>
<dbReference type="FunFam" id="1.10.1140.10:FF:000001">
    <property type="entry name" value="ATP synthase subunit beta"/>
    <property type="match status" value="1"/>
</dbReference>
<dbReference type="FunFam" id="3.40.50.300:FF:000026">
    <property type="entry name" value="ATP synthase subunit beta"/>
    <property type="match status" value="1"/>
</dbReference>
<dbReference type="Gene3D" id="2.40.10.170">
    <property type="match status" value="1"/>
</dbReference>
<dbReference type="Gene3D" id="1.10.1140.10">
    <property type="entry name" value="Bovine Mitochondrial F1-atpase, Atp Synthase Beta Chain, Chain D, domain 3"/>
    <property type="match status" value="1"/>
</dbReference>
<dbReference type="Gene3D" id="3.40.50.300">
    <property type="entry name" value="P-loop containing nucleotide triphosphate hydrolases"/>
    <property type="match status" value="1"/>
</dbReference>
<dbReference type="HAMAP" id="MF_01347">
    <property type="entry name" value="ATP_synth_beta_bact"/>
    <property type="match status" value="1"/>
</dbReference>
<dbReference type="InterPro" id="IPR003593">
    <property type="entry name" value="AAA+_ATPase"/>
</dbReference>
<dbReference type="InterPro" id="IPR055190">
    <property type="entry name" value="ATP-synt_VA_C"/>
</dbReference>
<dbReference type="InterPro" id="IPR005722">
    <property type="entry name" value="ATP_synth_F1_bsu"/>
</dbReference>
<dbReference type="InterPro" id="IPR020003">
    <property type="entry name" value="ATPase_a/bsu_AS"/>
</dbReference>
<dbReference type="InterPro" id="IPR050053">
    <property type="entry name" value="ATPase_alpha/beta_chains"/>
</dbReference>
<dbReference type="InterPro" id="IPR004100">
    <property type="entry name" value="ATPase_F1/V1/A1_a/bsu_N"/>
</dbReference>
<dbReference type="InterPro" id="IPR036121">
    <property type="entry name" value="ATPase_F1/V1/A1_a/bsu_N_sf"/>
</dbReference>
<dbReference type="InterPro" id="IPR000194">
    <property type="entry name" value="ATPase_F1/V1/A1_a/bsu_nucl-bd"/>
</dbReference>
<dbReference type="InterPro" id="IPR024034">
    <property type="entry name" value="ATPase_F1/V1_b/a_C"/>
</dbReference>
<dbReference type="InterPro" id="IPR027417">
    <property type="entry name" value="P-loop_NTPase"/>
</dbReference>
<dbReference type="NCBIfam" id="TIGR01039">
    <property type="entry name" value="atpD"/>
    <property type="match status" value="1"/>
</dbReference>
<dbReference type="PANTHER" id="PTHR15184">
    <property type="entry name" value="ATP SYNTHASE"/>
    <property type="match status" value="1"/>
</dbReference>
<dbReference type="PANTHER" id="PTHR15184:SF71">
    <property type="entry name" value="ATP SYNTHASE SUBUNIT BETA, MITOCHONDRIAL"/>
    <property type="match status" value="1"/>
</dbReference>
<dbReference type="Pfam" id="PF00006">
    <property type="entry name" value="ATP-synt_ab"/>
    <property type="match status" value="1"/>
</dbReference>
<dbReference type="Pfam" id="PF02874">
    <property type="entry name" value="ATP-synt_ab_N"/>
    <property type="match status" value="1"/>
</dbReference>
<dbReference type="Pfam" id="PF22919">
    <property type="entry name" value="ATP-synt_VA_C"/>
    <property type="match status" value="1"/>
</dbReference>
<dbReference type="SMART" id="SM00382">
    <property type="entry name" value="AAA"/>
    <property type="match status" value="1"/>
</dbReference>
<dbReference type="SUPFAM" id="SSF47917">
    <property type="entry name" value="C-terminal domain of alpha and beta subunits of F1 ATP synthase"/>
    <property type="match status" value="1"/>
</dbReference>
<dbReference type="SUPFAM" id="SSF50615">
    <property type="entry name" value="N-terminal domain of alpha and beta subunits of F1 ATP synthase"/>
    <property type="match status" value="1"/>
</dbReference>
<dbReference type="SUPFAM" id="SSF52540">
    <property type="entry name" value="P-loop containing nucleoside triphosphate hydrolases"/>
    <property type="match status" value="1"/>
</dbReference>
<dbReference type="PROSITE" id="PS00152">
    <property type="entry name" value="ATPASE_ALPHA_BETA"/>
    <property type="match status" value="1"/>
</dbReference>